<evidence type="ECO:0000255" key="1"/>
<evidence type="ECO:0000255" key="2">
    <source>
        <dbReference type="HAMAP-Rule" id="MF_00684"/>
    </source>
</evidence>
<dbReference type="EC" id="3.5.1.135" evidence="2"/>
<dbReference type="EMBL" id="CP000671">
    <property type="protein sequence ID" value="ABQ98302.1"/>
    <property type="molecule type" value="Genomic_DNA"/>
</dbReference>
<dbReference type="SMR" id="A5UC01"/>
<dbReference type="KEGG" id="hip:CGSHiEE_04535"/>
<dbReference type="HOGENOM" id="CLU_152586_0_0_6"/>
<dbReference type="GO" id="GO:0005829">
    <property type="term" value="C:cytosol"/>
    <property type="evidence" value="ECO:0007669"/>
    <property type="project" value="TreeGrafter"/>
</dbReference>
<dbReference type="GO" id="GO:0016813">
    <property type="term" value="F:hydrolase activity, acting on carbon-nitrogen (but not peptide) bonds, in linear amidines"/>
    <property type="evidence" value="ECO:0007669"/>
    <property type="project" value="UniProtKB-UniRule"/>
</dbReference>
<dbReference type="GO" id="GO:0106251">
    <property type="term" value="F:N4-acetylcytidine amidohydrolase activity"/>
    <property type="evidence" value="ECO:0007669"/>
    <property type="project" value="RHEA"/>
</dbReference>
<dbReference type="CDD" id="cd06552">
    <property type="entry name" value="ASCH_yqfb_like"/>
    <property type="match status" value="1"/>
</dbReference>
<dbReference type="FunFam" id="2.30.130.30:FF:000001">
    <property type="entry name" value="UPF0267 protein YqfB"/>
    <property type="match status" value="1"/>
</dbReference>
<dbReference type="Gene3D" id="2.30.130.30">
    <property type="entry name" value="Hypothetical protein"/>
    <property type="match status" value="1"/>
</dbReference>
<dbReference type="HAMAP" id="MF_00684">
    <property type="entry name" value="ac4C_amidohydr"/>
    <property type="match status" value="1"/>
</dbReference>
<dbReference type="InterPro" id="IPR008314">
    <property type="entry name" value="AC4CH"/>
</dbReference>
<dbReference type="InterPro" id="IPR007374">
    <property type="entry name" value="ASCH_domain"/>
</dbReference>
<dbReference type="InterPro" id="IPR015947">
    <property type="entry name" value="PUA-like_sf"/>
</dbReference>
<dbReference type="NCBIfam" id="NF003443">
    <property type="entry name" value="PRK04980.1"/>
    <property type="match status" value="1"/>
</dbReference>
<dbReference type="PANTHER" id="PTHR38088">
    <property type="entry name" value="UCP029143 FAMILY PROTEIN"/>
    <property type="match status" value="1"/>
</dbReference>
<dbReference type="PANTHER" id="PTHR38088:SF2">
    <property type="entry name" value="UCP029143 FAMILY PROTEIN"/>
    <property type="match status" value="1"/>
</dbReference>
<dbReference type="Pfam" id="PF04266">
    <property type="entry name" value="ASCH"/>
    <property type="match status" value="1"/>
</dbReference>
<dbReference type="PIRSF" id="PIRSF029143">
    <property type="entry name" value="UCP029143"/>
    <property type="match status" value="1"/>
</dbReference>
<dbReference type="SMART" id="SM01022">
    <property type="entry name" value="ASCH"/>
    <property type="match status" value="1"/>
</dbReference>
<dbReference type="SUPFAM" id="SSF88697">
    <property type="entry name" value="PUA domain-like"/>
    <property type="match status" value="1"/>
</dbReference>
<protein>
    <recommendedName>
        <fullName evidence="2">N(4)-acetylcytidine amidohydrolase</fullName>
        <shortName evidence="2">ac4C amidohydrolase</shortName>
        <ecNumber evidence="2">3.5.1.135</ecNumber>
    </recommendedName>
</protein>
<reference key="1">
    <citation type="journal article" date="2007" name="Genome Biol.">
        <title>Characterization and modeling of the Haemophilus influenzae core and supragenomes based on the complete genomic sequences of Rd and 12 clinical nontypeable strains.</title>
        <authorList>
            <person name="Hogg J.S."/>
            <person name="Hu F.Z."/>
            <person name="Janto B."/>
            <person name="Boissy R."/>
            <person name="Hayes J."/>
            <person name="Keefe R."/>
            <person name="Post J.C."/>
            <person name="Ehrlich G.D."/>
        </authorList>
    </citation>
    <scope>NUCLEOTIDE SEQUENCE [LARGE SCALE GENOMIC DNA]</scope>
    <source>
        <strain>PittEE</strain>
    </source>
</reference>
<keyword id="KW-0378">Hydrolase</keyword>
<gene>
    <name type="ordered locus">CGSHiEE_04535</name>
</gene>
<name>AC4CH_HAEIE</name>
<comment type="function">
    <text evidence="2">Catalyzes the hydrolysis of N(4)-acetylcytidine (ac4C).</text>
</comment>
<comment type="catalytic activity">
    <reaction evidence="2">
        <text>N(4)-acetylcytidine + H2O = cytidine + acetate + H(+)</text>
        <dbReference type="Rhea" id="RHEA:62932"/>
        <dbReference type="ChEBI" id="CHEBI:15377"/>
        <dbReference type="ChEBI" id="CHEBI:15378"/>
        <dbReference type="ChEBI" id="CHEBI:17562"/>
        <dbReference type="ChEBI" id="CHEBI:30089"/>
        <dbReference type="ChEBI" id="CHEBI:70989"/>
        <dbReference type="EC" id="3.5.1.135"/>
    </reaction>
</comment>
<comment type="catalytic activity">
    <reaction evidence="2">
        <text>N(4)-acetyl-2'-deoxycytidine + H2O = 2'-deoxycytidine + acetate + H(+)</text>
        <dbReference type="Rhea" id="RHEA:62936"/>
        <dbReference type="ChEBI" id="CHEBI:15377"/>
        <dbReference type="ChEBI" id="CHEBI:15378"/>
        <dbReference type="ChEBI" id="CHEBI:15698"/>
        <dbReference type="ChEBI" id="CHEBI:30089"/>
        <dbReference type="ChEBI" id="CHEBI:146133"/>
        <dbReference type="EC" id="3.5.1.135"/>
    </reaction>
</comment>
<comment type="catalytic activity">
    <reaction evidence="2">
        <text>N(4)-acetylcytosine + H2O = cytosine + acetate + H(+)</text>
        <dbReference type="Rhea" id="RHEA:62940"/>
        <dbReference type="ChEBI" id="CHEBI:15377"/>
        <dbReference type="ChEBI" id="CHEBI:15378"/>
        <dbReference type="ChEBI" id="CHEBI:16040"/>
        <dbReference type="ChEBI" id="CHEBI:30089"/>
        <dbReference type="ChEBI" id="CHEBI:146134"/>
        <dbReference type="EC" id="3.5.1.135"/>
    </reaction>
</comment>
<comment type="similarity">
    <text evidence="2">Belongs to the N(4)-acetylcytidine amidohydrolase family.</text>
</comment>
<accession>A5UC01</accession>
<organism>
    <name type="scientific">Haemophilus influenzae (strain PittEE)</name>
    <dbReference type="NCBI Taxonomy" id="374930"/>
    <lineage>
        <taxon>Bacteria</taxon>
        <taxon>Pseudomonadati</taxon>
        <taxon>Pseudomonadota</taxon>
        <taxon>Gammaproteobacteria</taxon>
        <taxon>Pasteurellales</taxon>
        <taxon>Pasteurellaceae</taxon>
        <taxon>Haemophilus</taxon>
    </lineage>
</organism>
<feature type="chain" id="PRO_1000044950" description="N(4)-acetylcytidine amidohydrolase">
    <location>
        <begin position="1"/>
        <end position="104"/>
    </location>
</feature>
<feature type="domain" description="ASCH" evidence="1">
    <location>
        <begin position="6"/>
        <end position="102"/>
    </location>
</feature>
<feature type="active site" description="Proton acceptor" evidence="2">
    <location>
        <position position="21"/>
    </location>
</feature>
<feature type="active site" description="Nucleophile" evidence="2">
    <location>
        <position position="24"/>
    </location>
</feature>
<feature type="active site" description="Proton donor" evidence="2">
    <location>
        <position position="74"/>
    </location>
</feature>
<proteinExistence type="inferred from homology"/>
<sequence length="104" mass="12191">MQPNDITFYQRFEADILAGRKTITIRDKSESYFKAGDILRVGRFEDNQYFCTIEVLSVSPITLDELTEQHAKQENMGLAELREVIKTIYPNESEFWVIEIRLVN</sequence>